<keyword id="KW-0648">Protein biosynthesis</keyword>
<keyword id="KW-1185">Reference proteome</keyword>
<keyword id="KW-0808">Transferase</keyword>
<protein>
    <recommendedName>
        <fullName evidence="1">Methionyl-tRNA formyltransferase</fullName>
        <ecNumber evidence="1">2.1.2.9</ecNumber>
    </recommendedName>
</protein>
<feature type="chain" id="PRO_1000020120" description="Methionyl-tRNA formyltransferase">
    <location>
        <begin position="1"/>
        <end position="319"/>
    </location>
</feature>
<feature type="binding site" evidence="1">
    <location>
        <begin position="112"/>
        <end position="115"/>
    </location>
    <ligand>
        <name>(6S)-5,6,7,8-tetrahydrofolate</name>
        <dbReference type="ChEBI" id="CHEBI:57453"/>
    </ligand>
</feature>
<sequence>MSSRSIVFMGTPEFACPTLQALIDRGERLLAVVTQPDRPKGRGHKLMPPPVKELALAHDIPVLQPHRVRASAFVESIRQLAPELIVVVAFGQILPKALLDIPPLGCVNVHASLLPRYRGAAPLNWCIINGETETGVTTMLMDTGLDTGPMLLKRSTPIDENEDIVSLHDRMASLGAELLAETLDGLREGRIEPQPQNDSLSCYAPLLKKEHGLIDWQRPARQIHNQVRGLAAWPGAQTLLNGHALKLFRTRVADGAGAPGTVLCSTGGQLEVACLDGSLLIQELQLAGKKRLDSASFLAGCPIAEGTLLGGAATERPIP</sequence>
<dbReference type="EC" id="2.1.2.9" evidence="1"/>
<dbReference type="EMBL" id="CP000482">
    <property type="protein sequence ID" value="ABK98144.1"/>
    <property type="molecule type" value="Genomic_DNA"/>
</dbReference>
<dbReference type="RefSeq" id="WP_011734458.1">
    <property type="nucleotide sequence ID" value="NC_008609.1"/>
</dbReference>
<dbReference type="SMR" id="A1ALC4"/>
<dbReference type="STRING" id="338966.Ppro_0513"/>
<dbReference type="KEGG" id="ppd:Ppro_0513"/>
<dbReference type="eggNOG" id="COG0223">
    <property type="taxonomic scope" value="Bacteria"/>
</dbReference>
<dbReference type="HOGENOM" id="CLU_033347_1_1_7"/>
<dbReference type="OrthoDB" id="9802815at2"/>
<dbReference type="Proteomes" id="UP000006732">
    <property type="component" value="Chromosome"/>
</dbReference>
<dbReference type="GO" id="GO:0005829">
    <property type="term" value="C:cytosol"/>
    <property type="evidence" value="ECO:0007669"/>
    <property type="project" value="TreeGrafter"/>
</dbReference>
<dbReference type="GO" id="GO:0004479">
    <property type="term" value="F:methionyl-tRNA formyltransferase activity"/>
    <property type="evidence" value="ECO:0007669"/>
    <property type="project" value="UniProtKB-UniRule"/>
</dbReference>
<dbReference type="CDD" id="cd08646">
    <property type="entry name" value="FMT_core_Met-tRNA-FMT_N"/>
    <property type="match status" value="1"/>
</dbReference>
<dbReference type="CDD" id="cd08704">
    <property type="entry name" value="Met_tRNA_FMT_C"/>
    <property type="match status" value="1"/>
</dbReference>
<dbReference type="Gene3D" id="3.10.25.10">
    <property type="entry name" value="Formyl transferase, C-terminal domain"/>
    <property type="match status" value="1"/>
</dbReference>
<dbReference type="Gene3D" id="3.40.50.170">
    <property type="entry name" value="Formyl transferase, N-terminal domain"/>
    <property type="match status" value="1"/>
</dbReference>
<dbReference type="HAMAP" id="MF_00182">
    <property type="entry name" value="Formyl_trans"/>
    <property type="match status" value="1"/>
</dbReference>
<dbReference type="InterPro" id="IPR005794">
    <property type="entry name" value="Fmt"/>
</dbReference>
<dbReference type="InterPro" id="IPR005793">
    <property type="entry name" value="Formyl_trans_C"/>
</dbReference>
<dbReference type="InterPro" id="IPR037022">
    <property type="entry name" value="Formyl_trans_C_sf"/>
</dbReference>
<dbReference type="InterPro" id="IPR002376">
    <property type="entry name" value="Formyl_transf_N"/>
</dbReference>
<dbReference type="InterPro" id="IPR036477">
    <property type="entry name" value="Formyl_transf_N_sf"/>
</dbReference>
<dbReference type="InterPro" id="IPR011034">
    <property type="entry name" value="Formyl_transferase-like_C_sf"/>
</dbReference>
<dbReference type="InterPro" id="IPR044135">
    <property type="entry name" value="Met-tRNA-FMT_C"/>
</dbReference>
<dbReference type="InterPro" id="IPR041711">
    <property type="entry name" value="Met-tRNA-FMT_N"/>
</dbReference>
<dbReference type="NCBIfam" id="TIGR00460">
    <property type="entry name" value="fmt"/>
    <property type="match status" value="1"/>
</dbReference>
<dbReference type="PANTHER" id="PTHR11138">
    <property type="entry name" value="METHIONYL-TRNA FORMYLTRANSFERASE"/>
    <property type="match status" value="1"/>
</dbReference>
<dbReference type="PANTHER" id="PTHR11138:SF5">
    <property type="entry name" value="METHIONYL-TRNA FORMYLTRANSFERASE, MITOCHONDRIAL"/>
    <property type="match status" value="1"/>
</dbReference>
<dbReference type="Pfam" id="PF02911">
    <property type="entry name" value="Formyl_trans_C"/>
    <property type="match status" value="1"/>
</dbReference>
<dbReference type="Pfam" id="PF00551">
    <property type="entry name" value="Formyl_trans_N"/>
    <property type="match status" value="1"/>
</dbReference>
<dbReference type="SUPFAM" id="SSF50486">
    <property type="entry name" value="FMT C-terminal domain-like"/>
    <property type="match status" value="1"/>
</dbReference>
<dbReference type="SUPFAM" id="SSF53328">
    <property type="entry name" value="Formyltransferase"/>
    <property type="match status" value="1"/>
</dbReference>
<reference key="1">
    <citation type="submission" date="2006-10" db="EMBL/GenBank/DDBJ databases">
        <title>Complete sequence of chromosome of Pelobacter propionicus DSM 2379.</title>
        <authorList>
            <consortium name="US DOE Joint Genome Institute"/>
            <person name="Copeland A."/>
            <person name="Lucas S."/>
            <person name="Lapidus A."/>
            <person name="Barry K."/>
            <person name="Detter J.C."/>
            <person name="Glavina del Rio T."/>
            <person name="Hammon N."/>
            <person name="Israni S."/>
            <person name="Dalin E."/>
            <person name="Tice H."/>
            <person name="Pitluck S."/>
            <person name="Saunders E."/>
            <person name="Brettin T."/>
            <person name="Bruce D."/>
            <person name="Han C."/>
            <person name="Tapia R."/>
            <person name="Schmutz J."/>
            <person name="Larimer F."/>
            <person name="Land M."/>
            <person name="Hauser L."/>
            <person name="Kyrpides N."/>
            <person name="Kim E."/>
            <person name="Lovley D."/>
            <person name="Richardson P."/>
        </authorList>
    </citation>
    <scope>NUCLEOTIDE SEQUENCE [LARGE SCALE GENOMIC DNA]</scope>
    <source>
        <strain>DSM 2379 / NBRC 103807 / OttBd1</strain>
    </source>
</reference>
<proteinExistence type="inferred from homology"/>
<evidence type="ECO:0000255" key="1">
    <source>
        <dbReference type="HAMAP-Rule" id="MF_00182"/>
    </source>
</evidence>
<comment type="function">
    <text evidence="1">Attaches a formyl group to the free amino group of methionyl-tRNA(fMet). The formyl group appears to play a dual role in the initiator identity of N-formylmethionyl-tRNA by promoting its recognition by IF2 and preventing the misappropriation of this tRNA by the elongation apparatus.</text>
</comment>
<comment type="catalytic activity">
    <reaction evidence="1">
        <text>L-methionyl-tRNA(fMet) + (6R)-10-formyltetrahydrofolate = N-formyl-L-methionyl-tRNA(fMet) + (6S)-5,6,7,8-tetrahydrofolate + H(+)</text>
        <dbReference type="Rhea" id="RHEA:24380"/>
        <dbReference type="Rhea" id="RHEA-COMP:9952"/>
        <dbReference type="Rhea" id="RHEA-COMP:9953"/>
        <dbReference type="ChEBI" id="CHEBI:15378"/>
        <dbReference type="ChEBI" id="CHEBI:57453"/>
        <dbReference type="ChEBI" id="CHEBI:78530"/>
        <dbReference type="ChEBI" id="CHEBI:78844"/>
        <dbReference type="ChEBI" id="CHEBI:195366"/>
        <dbReference type="EC" id="2.1.2.9"/>
    </reaction>
</comment>
<comment type="similarity">
    <text evidence="1">Belongs to the Fmt family.</text>
</comment>
<gene>
    <name evidence="1" type="primary">fmt</name>
    <name type="ordered locus">Ppro_0513</name>
</gene>
<name>FMT_PELPD</name>
<accession>A1ALC4</accession>
<organism>
    <name type="scientific">Pelobacter propionicus (strain DSM 2379 / NBRC 103807 / OttBd1)</name>
    <dbReference type="NCBI Taxonomy" id="338966"/>
    <lineage>
        <taxon>Bacteria</taxon>
        <taxon>Pseudomonadati</taxon>
        <taxon>Thermodesulfobacteriota</taxon>
        <taxon>Desulfuromonadia</taxon>
        <taxon>Desulfuromonadales</taxon>
        <taxon>Desulfuromonadaceae</taxon>
        <taxon>Pelobacter</taxon>
    </lineage>
</organism>